<name>LPXD_SHIFL</name>
<proteinExistence type="inferred from homology"/>
<dbReference type="EC" id="2.3.1.191" evidence="2"/>
<dbReference type="EMBL" id="AE005674">
    <property type="protein sequence ID" value="AAN41831.1"/>
    <property type="molecule type" value="Genomic_DNA"/>
</dbReference>
<dbReference type="EMBL" id="AE014073">
    <property type="protein sequence ID" value="AAP15712.1"/>
    <property type="molecule type" value="Genomic_DNA"/>
</dbReference>
<dbReference type="RefSeq" id="NP_706124.1">
    <property type="nucleotide sequence ID" value="NC_004337.2"/>
</dbReference>
<dbReference type="RefSeq" id="WP_001139282.1">
    <property type="nucleotide sequence ID" value="NZ_WPGW01000006.1"/>
</dbReference>
<dbReference type="SMR" id="P65324"/>
<dbReference type="STRING" id="198214.SF0169"/>
<dbReference type="PaxDb" id="198214-SF0169"/>
<dbReference type="GeneID" id="1024439"/>
<dbReference type="GeneID" id="93777246"/>
<dbReference type="KEGG" id="sfl:SF0169"/>
<dbReference type="KEGG" id="sfx:S0172"/>
<dbReference type="PATRIC" id="fig|198214.7.peg.191"/>
<dbReference type="HOGENOM" id="CLU_049865_0_1_6"/>
<dbReference type="UniPathway" id="UPA00359">
    <property type="reaction ID" value="UER00479"/>
</dbReference>
<dbReference type="Proteomes" id="UP000001006">
    <property type="component" value="Chromosome"/>
</dbReference>
<dbReference type="Proteomes" id="UP000002673">
    <property type="component" value="Chromosome"/>
</dbReference>
<dbReference type="GO" id="GO:0016020">
    <property type="term" value="C:membrane"/>
    <property type="evidence" value="ECO:0007669"/>
    <property type="project" value="GOC"/>
</dbReference>
<dbReference type="GO" id="GO:0016410">
    <property type="term" value="F:N-acyltransferase activity"/>
    <property type="evidence" value="ECO:0007669"/>
    <property type="project" value="InterPro"/>
</dbReference>
<dbReference type="GO" id="GO:0103118">
    <property type="term" value="F:UDP-3-O-(R-3-hydroxymyristoyl)-glucosamine N-acyltransferase activity"/>
    <property type="evidence" value="ECO:0007669"/>
    <property type="project" value="UniProtKB-EC"/>
</dbReference>
<dbReference type="GO" id="GO:0009245">
    <property type="term" value="P:lipid A biosynthetic process"/>
    <property type="evidence" value="ECO:0007669"/>
    <property type="project" value="UniProtKB-UniRule"/>
</dbReference>
<dbReference type="CDD" id="cd03352">
    <property type="entry name" value="LbH_LpxD"/>
    <property type="match status" value="1"/>
</dbReference>
<dbReference type="FunFam" id="1.20.5.170:FF:000032">
    <property type="entry name" value="UDP-3-O-(3-hydroxymyristoyl)glucosamine N-acyltransferase"/>
    <property type="match status" value="1"/>
</dbReference>
<dbReference type="FunFam" id="2.160.10.10:FF:000005">
    <property type="entry name" value="UDP-3-O-(3-hydroxymyristoyl)glucosamine N-acyltransferase"/>
    <property type="match status" value="1"/>
</dbReference>
<dbReference type="FunFam" id="3.40.1390.10:FF:000001">
    <property type="entry name" value="UDP-3-O-(3-hydroxymyristoyl)glucosamine N-acyltransferase"/>
    <property type="match status" value="1"/>
</dbReference>
<dbReference type="Gene3D" id="1.20.5.170">
    <property type="match status" value="1"/>
</dbReference>
<dbReference type="Gene3D" id="2.160.10.10">
    <property type="entry name" value="Hexapeptide repeat proteins"/>
    <property type="match status" value="1"/>
</dbReference>
<dbReference type="Gene3D" id="3.40.1390.10">
    <property type="entry name" value="MurE/MurF, N-terminal domain"/>
    <property type="match status" value="1"/>
</dbReference>
<dbReference type="HAMAP" id="MF_00523">
    <property type="entry name" value="LpxD"/>
    <property type="match status" value="1"/>
</dbReference>
<dbReference type="InterPro" id="IPR001451">
    <property type="entry name" value="Hexapep"/>
</dbReference>
<dbReference type="InterPro" id="IPR018357">
    <property type="entry name" value="Hexapep_transf_CS"/>
</dbReference>
<dbReference type="InterPro" id="IPR007691">
    <property type="entry name" value="LpxD"/>
</dbReference>
<dbReference type="InterPro" id="IPR011004">
    <property type="entry name" value="Trimer_LpxA-like_sf"/>
</dbReference>
<dbReference type="InterPro" id="IPR020573">
    <property type="entry name" value="UDP_GlcNAc_AcTrfase_non-rep"/>
</dbReference>
<dbReference type="NCBIfam" id="TIGR01853">
    <property type="entry name" value="lipid_A_lpxD"/>
    <property type="match status" value="1"/>
</dbReference>
<dbReference type="NCBIfam" id="NF002060">
    <property type="entry name" value="PRK00892.1"/>
    <property type="match status" value="1"/>
</dbReference>
<dbReference type="PANTHER" id="PTHR43378">
    <property type="entry name" value="UDP-3-O-ACYLGLUCOSAMINE N-ACYLTRANSFERASE"/>
    <property type="match status" value="1"/>
</dbReference>
<dbReference type="PANTHER" id="PTHR43378:SF2">
    <property type="entry name" value="UDP-3-O-ACYLGLUCOSAMINE N-ACYLTRANSFERASE 1, MITOCHONDRIAL-RELATED"/>
    <property type="match status" value="1"/>
</dbReference>
<dbReference type="Pfam" id="PF00132">
    <property type="entry name" value="Hexapep"/>
    <property type="match status" value="3"/>
</dbReference>
<dbReference type="Pfam" id="PF04613">
    <property type="entry name" value="LpxD"/>
    <property type="match status" value="1"/>
</dbReference>
<dbReference type="SUPFAM" id="SSF51161">
    <property type="entry name" value="Trimeric LpxA-like enzymes"/>
    <property type="match status" value="1"/>
</dbReference>
<dbReference type="PROSITE" id="PS00101">
    <property type="entry name" value="HEXAPEP_TRANSFERASES"/>
    <property type="match status" value="4"/>
</dbReference>
<protein>
    <recommendedName>
        <fullName evidence="2">UDP-3-O-(3-hydroxymyristoyl)glucosamine N-acyltransferase</fullName>
        <shortName evidence="2">UDP-3-O-(3-OHC14)-GlcN N-acyltransferase</shortName>
        <ecNumber evidence="2">2.3.1.191</ecNumber>
    </recommendedName>
    <alternativeName>
        <fullName evidence="2">UDP-3-O-(3-hydroxytetradecanoyl)glucosamine N-acyltransferase</fullName>
    </alternativeName>
</protein>
<evidence type="ECO:0000250" key="1"/>
<evidence type="ECO:0000255" key="2">
    <source>
        <dbReference type="HAMAP-Rule" id="MF_00523"/>
    </source>
</evidence>
<sequence length="341" mass="36024">MPSIRLADLAQQLDAELHGDGDIVITGVASMQSAQTGHITFMVNPKYREHLGLCQASAVVMTQDDLPFAKSAALVVKNPYLTYARMAQILDTTPQPAQNIAPSAVIDATAKLGNNVSIGANAVIESGVELGDNVIIGAGCFVGKNSKIGAGSRLWANVTIYHEIQIGQNCLIQSGTVVGADGFGYANDRGNWVKIPQIGRVIIGDRVEIGACTTIDRGALDDTVIGNGVIIDNQCQIAHNVVIGDNTAVAGGVIMAGSLKIGRYCMIGGASVINGHMEICDKVTVTGMGMVMRPITEPGVYSSGIPLQPNKVWRKTAALVMNIDDMSKRLKSLERKVNQQD</sequence>
<feature type="initiator methionine" description="Removed" evidence="1">
    <location>
        <position position="1"/>
    </location>
</feature>
<feature type="chain" id="PRO_0000059704" description="UDP-3-O-(3-hydroxymyristoyl)glucosamine N-acyltransferase">
    <location>
        <begin position="2"/>
        <end position="341"/>
    </location>
</feature>
<feature type="active site" description="Proton acceptor" evidence="2">
    <location>
        <position position="239"/>
    </location>
</feature>
<accession>P65324</accession>
<accession>P58610</accession>
<organism>
    <name type="scientific">Shigella flexneri</name>
    <dbReference type="NCBI Taxonomy" id="623"/>
    <lineage>
        <taxon>Bacteria</taxon>
        <taxon>Pseudomonadati</taxon>
        <taxon>Pseudomonadota</taxon>
        <taxon>Gammaproteobacteria</taxon>
        <taxon>Enterobacterales</taxon>
        <taxon>Enterobacteriaceae</taxon>
        <taxon>Shigella</taxon>
    </lineage>
</organism>
<comment type="function">
    <text evidence="2">Catalyzes the N-acylation of UDP-3-O-(hydroxytetradecanoyl)glucosamine using 3-hydroxytetradecanoyl-ACP as the acyl donor. Is involved in the biosynthesis of lipid A, a phosphorylated glycolipid that anchors the lipopolysaccharide to the outer membrane of the cell.</text>
</comment>
<comment type="catalytic activity">
    <reaction evidence="2">
        <text>a UDP-3-O-[(3R)-3-hydroxyacyl]-alpha-D-glucosamine + a (3R)-hydroxyacyl-[ACP] = a UDP-2-N,3-O-bis[(3R)-3-hydroxyacyl]-alpha-D-glucosamine + holo-[ACP] + H(+)</text>
        <dbReference type="Rhea" id="RHEA:53836"/>
        <dbReference type="Rhea" id="RHEA-COMP:9685"/>
        <dbReference type="Rhea" id="RHEA-COMP:9945"/>
        <dbReference type="ChEBI" id="CHEBI:15378"/>
        <dbReference type="ChEBI" id="CHEBI:64479"/>
        <dbReference type="ChEBI" id="CHEBI:78827"/>
        <dbReference type="ChEBI" id="CHEBI:137740"/>
        <dbReference type="ChEBI" id="CHEBI:137748"/>
        <dbReference type="EC" id="2.3.1.191"/>
    </reaction>
</comment>
<comment type="catalytic activity">
    <reaction evidence="2">
        <text>UDP-3-O-[(3R)-3-hydroxytetradecanoyl]-alpha-D-glucosamine + (3R)-hydroxytetradecanoyl-[ACP] = UDP-2-N,3-O-bis[(3R)-3-hydroxytetradecanoyl]-alpha-D-glucosamine + holo-[ACP] + H(+)</text>
        <dbReference type="Rhea" id="RHEA:17817"/>
        <dbReference type="Rhea" id="RHEA-COMP:9646"/>
        <dbReference type="Rhea" id="RHEA-COMP:9685"/>
        <dbReference type="ChEBI" id="CHEBI:15378"/>
        <dbReference type="ChEBI" id="CHEBI:64479"/>
        <dbReference type="ChEBI" id="CHEBI:71573"/>
        <dbReference type="ChEBI" id="CHEBI:78474"/>
        <dbReference type="ChEBI" id="CHEBI:78847"/>
    </reaction>
</comment>
<comment type="pathway">
    <text evidence="2">Glycolipid biosynthesis; lipid IV(A) biosynthesis; lipid IV(A) from (3R)-3-hydroxytetradecanoyl-[acyl-carrier-protein] and UDP-N-acetyl-alpha-D-glucosamine: step 3/6.</text>
</comment>
<comment type="subunit">
    <text evidence="2">Homotrimer.</text>
</comment>
<comment type="similarity">
    <text evidence="2">Belongs to the transferase hexapeptide repeat family. LpxD subfamily.</text>
</comment>
<keyword id="KW-0012">Acyltransferase</keyword>
<keyword id="KW-0441">Lipid A biosynthesis</keyword>
<keyword id="KW-0444">Lipid biosynthesis</keyword>
<keyword id="KW-0443">Lipid metabolism</keyword>
<keyword id="KW-1185">Reference proteome</keyword>
<keyword id="KW-0677">Repeat</keyword>
<keyword id="KW-0808">Transferase</keyword>
<gene>
    <name evidence="2" type="primary">lpxD</name>
    <name type="ordered locus">SF0169</name>
    <name type="ordered locus">S0172</name>
</gene>
<reference key="1">
    <citation type="journal article" date="2002" name="Nucleic Acids Res.">
        <title>Genome sequence of Shigella flexneri 2a: insights into pathogenicity through comparison with genomes of Escherichia coli K12 and O157.</title>
        <authorList>
            <person name="Jin Q."/>
            <person name="Yuan Z."/>
            <person name="Xu J."/>
            <person name="Wang Y."/>
            <person name="Shen Y."/>
            <person name="Lu W."/>
            <person name="Wang J."/>
            <person name="Liu H."/>
            <person name="Yang J."/>
            <person name="Yang F."/>
            <person name="Zhang X."/>
            <person name="Zhang J."/>
            <person name="Yang G."/>
            <person name="Wu H."/>
            <person name="Qu D."/>
            <person name="Dong J."/>
            <person name="Sun L."/>
            <person name="Xue Y."/>
            <person name="Zhao A."/>
            <person name="Gao Y."/>
            <person name="Zhu J."/>
            <person name="Kan B."/>
            <person name="Ding K."/>
            <person name="Chen S."/>
            <person name="Cheng H."/>
            <person name="Yao Z."/>
            <person name="He B."/>
            <person name="Chen R."/>
            <person name="Ma D."/>
            <person name="Qiang B."/>
            <person name="Wen Y."/>
            <person name="Hou Y."/>
            <person name="Yu J."/>
        </authorList>
    </citation>
    <scope>NUCLEOTIDE SEQUENCE [LARGE SCALE GENOMIC DNA]</scope>
    <source>
        <strain>301 / Serotype 2a</strain>
    </source>
</reference>
<reference key="2">
    <citation type="journal article" date="2003" name="Infect. Immun.">
        <title>Complete genome sequence and comparative genomics of Shigella flexneri serotype 2a strain 2457T.</title>
        <authorList>
            <person name="Wei J."/>
            <person name="Goldberg M.B."/>
            <person name="Burland V."/>
            <person name="Venkatesan M.M."/>
            <person name="Deng W."/>
            <person name="Fournier G."/>
            <person name="Mayhew G.F."/>
            <person name="Plunkett G. III"/>
            <person name="Rose D.J."/>
            <person name="Darling A."/>
            <person name="Mau B."/>
            <person name="Perna N.T."/>
            <person name="Payne S.M."/>
            <person name="Runyen-Janecky L.J."/>
            <person name="Zhou S."/>
            <person name="Schwartz D.C."/>
            <person name="Blattner F.R."/>
        </authorList>
    </citation>
    <scope>NUCLEOTIDE SEQUENCE [LARGE SCALE GENOMIC DNA]</scope>
    <source>
        <strain>ATCC 700930 / 2457T / Serotype 2a</strain>
    </source>
</reference>